<accession>A6TCA8</accession>
<proteinExistence type="inferred from homology"/>
<feature type="chain" id="PRO_0000389448" description="DnaA regulatory inactivator Hda">
    <location>
        <begin position="1"/>
        <end position="225"/>
    </location>
</feature>
<comment type="function">
    <text evidence="1">Mediates the interaction of DNA replication initiator protein DnaA with DNA polymerase subunit beta sliding clamp (dnaN). Stimulates hydrolysis of ATP-DnaA to ADP-DnaA, rendering DnaA inactive for reinitiation, a process called regulatory inhibition of DnaA or RIDA (By similarity).</text>
</comment>
<comment type="subunit">
    <text evidence="2">The active form seems to be an ADP-bound monomer. Forms the RIDA complex (regulatory inactivation of DnaA) of ATP-DnaA, ADP-Hda and the DNA-loaded beta sliding clamp (dnaN).</text>
</comment>
<comment type="similarity">
    <text evidence="2">Belongs to the DnaA family. HdA subfamily.</text>
</comment>
<sequence>MPLYLPDDETFASFWPGDNPSLLAALQNVLRQEHSGYIYIWSREGAGRSHLLHAACAELSQRGDAVGYVPLDKRTWFVPEVLEGMEQLALVCIDNIECVAGDEPWEMAIFNLYNRILESGKTRLLITGDRPPRQLNLGLPDLASRLDWGQIYKLQPLSDEDKLQALQLRARLRGFEMPEDVCRFLLKRLDREMRSLFMTLDQLDHASITAQRKLTIPFVKEILKL</sequence>
<evidence type="ECO:0000250" key="1"/>
<evidence type="ECO:0000255" key="2">
    <source>
        <dbReference type="HAMAP-Rule" id="MF_01158"/>
    </source>
</evidence>
<keyword id="KW-0235">DNA replication</keyword>
<keyword id="KW-0236">DNA replication inhibitor</keyword>
<gene>
    <name evidence="2" type="primary">hda</name>
    <name type="ordered locus">KPN78578_27680</name>
    <name type="ORF">KPN_02819</name>
</gene>
<name>HDA_KLEP7</name>
<dbReference type="EMBL" id="CP000647">
    <property type="protein sequence ID" value="ABR78229.1"/>
    <property type="molecule type" value="Genomic_DNA"/>
</dbReference>
<dbReference type="SMR" id="A6TCA8"/>
<dbReference type="STRING" id="272620.KPN_02819"/>
<dbReference type="PaxDb" id="272620-KPN_02819"/>
<dbReference type="EnsemblBacteria" id="ABR78229">
    <property type="protein sequence ID" value="ABR78229"/>
    <property type="gene ID" value="KPN_02819"/>
</dbReference>
<dbReference type="KEGG" id="kpn:KPN_02819"/>
<dbReference type="HOGENOM" id="CLU_072265_1_1_6"/>
<dbReference type="Proteomes" id="UP000000265">
    <property type="component" value="Chromosome"/>
</dbReference>
<dbReference type="GO" id="GO:0006270">
    <property type="term" value="P:DNA replication initiation"/>
    <property type="evidence" value="ECO:0007669"/>
    <property type="project" value="TreeGrafter"/>
</dbReference>
<dbReference type="GO" id="GO:0032297">
    <property type="term" value="P:negative regulation of DNA-templated DNA replication initiation"/>
    <property type="evidence" value="ECO:0007669"/>
    <property type="project" value="InterPro"/>
</dbReference>
<dbReference type="FunFam" id="1.10.8.60:FF:000024">
    <property type="entry name" value="DnaA regulatory inactivator Hda"/>
    <property type="match status" value="1"/>
</dbReference>
<dbReference type="FunFam" id="3.40.50.300:FF:000452">
    <property type="entry name" value="DnaA regulatory inactivator Hda"/>
    <property type="match status" value="1"/>
</dbReference>
<dbReference type="Gene3D" id="1.10.8.60">
    <property type="match status" value="1"/>
</dbReference>
<dbReference type="Gene3D" id="3.40.50.300">
    <property type="entry name" value="P-loop containing nucleotide triphosphate hydrolases"/>
    <property type="match status" value="1"/>
</dbReference>
<dbReference type="HAMAP" id="MF_01158">
    <property type="entry name" value="Hda"/>
    <property type="match status" value="1"/>
</dbReference>
<dbReference type="InterPro" id="IPR020591">
    <property type="entry name" value="Chromosome_initiator_DnaA-like"/>
</dbReference>
<dbReference type="InterPro" id="IPR013317">
    <property type="entry name" value="DnaA_dom"/>
</dbReference>
<dbReference type="InterPro" id="IPR017788">
    <property type="entry name" value="Hda"/>
</dbReference>
<dbReference type="InterPro" id="IPR022864">
    <property type="entry name" value="Hda_Enterobact"/>
</dbReference>
<dbReference type="InterPro" id="IPR055199">
    <property type="entry name" value="Hda_lid"/>
</dbReference>
<dbReference type="InterPro" id="IPR027417">
    <property type="entry name" value="P-loop_NTPase"/>
</dbReference>
<dbReference type="NCBIfam" id="TIGR03420">
    <property type="entry name" value="DnaA_homol_Hda"/>
    <property type="match status" value="1"/>
</dbReference>
<dbReference type="NCBIfam" id="NF005982">
    <property type="entry name" value="PRK08084.1"/>
    <property type="match status" value="1"/>
</dbReference>
<dbReference type="PANTHER" id="PTHR30050">
    <property type="entry name" value="CHROMOSOMAL REPLICATION INITIATOR PROTEIN DNAA"/>
    <property type="match status" value="1"/>
</dbReference>
<dbReference type="PANTHER" id="PTHR30050:SF5">
    <property type="entry name" value="DNAA REGULATORY INACTIVATOR HDA"/>
    <property type="match status" value="1"/>
</dbReference>
<dbReference type="Pfam" id="PF00308">
    <property type="entry name" value="Bac_DnaA"/>
    <property type="match status" value="1"/>
</dbReference>
<dbReference type="Pfam" id="PF22688">
    <property type="entry name" value="Hda_lid"/>
    <property type="match status" value="1"/>
</dbReference>
<dbReference type="PRINTS" id="PR00051">
    <property type="entry name" value="DNAA"/>
</dbReference>
<dbReference type="SUPFAM" id="SSF52540">
    <property type="entry name" value="P-loop containing nucleoside triphosphate hydrolases"/>
    <property type="match status" value="1"/>
</dbReference>
<reference key="1">
    <citation type="submission" date="2006-09" db="EMBL/GenBank/DDBJ databases">
        <authorList>
            <consortium name="The Klebsiella pneumonia Genome Sequencing Project"/>
            <person name="McClelland M."/>
            <person name="Sanderson E.K."/>
            <person name="Spieth J."/>
            <person name="Clifton W.S."/>
            <person name="Latreille P."/>
            <person name="Sabo A."/>
            <person name="Pepin K."/>
            <person name="Bhonagiri V."/>
            <person name="Porwollik S."/>
            <person name="Ali J."/>
            <person name="Wilson R.K."/>
        </authorList>
    </citation>
    <scope>NUCLEOTIDE SEQUENCE [LARGE SCALE GENOMIC DNA]</scope>
    <source>
        <strain>ATCC 700721 / MGH 78578</strain>
    </source>
</reference>
<protein>
    <recommendedName>
        <fullName evidence="2">DnaA regulatory inactivator Hda</fullName>
    </recommendedName>
</protein>
<organism>
    <name type="scientific">Klebsiella pneumoniae subsp. pneumoniae (strain ATCC 700721 / MGH 78578)</name>
    <dbReference type="NCBI Taxonomy" id="272620"/>
    <lineage>
        <taxon>Bacteria</taxon>
        <taxon>Pseudomonadati</taxon>
        <taxon>Pseudomonadota</taxon>
        <taxon>Gammaproteobacteria</taxon>
        <taxon>Enterobacterales</taxon>
        <taxon>Enterobacteriaceae</taxon>
        <taxon>Klebsiella/Raoultella group</taxon>
        <taxon>Klebsiella</taxon>
        <taxon>Klebsiella pneumoniae complex</taxon>
    </lineage>
</organism>